<reference key="1">
    <citation type="journal article" date="2000" name="Nature">
        <title>Sequence and analysis of chromosome 1 of the plant Arabidopsis thaliana.</title>
        <authorList>
            <person name="Theologis A."/>
            <person name="Ecker J.R."/>
            <person name="Palm C.J."/>
            <person name="Federspiel N.A."/>
            <person name="Kaul S."/>
            <person name="White O."/>
            <person name="Alonso J."/>
            <person name="Altafi H."/>
            <person name="Araujo R."/>
            <person name="Bowman C.L."/>
            <person name="Brooks S.Y."/>
            <person name="Buehler E."/>
            <person name="Chan A."/>
            <person name="Chao Q."/>
            <person name="Chen H."/>
            <person name="Cheuk R.F."/>
            <person name="Chin C.W."/>
            <person name="Chung M.K."/>
            <person name="Conn L."/>
            <person name="Conway A.B."/>
            <person name="Conway A.R."/>
            <person name="Creasy T.H."/>
            <person name="Dewar K."/>
            <person name="Dunn P."/>
            <person name="Etgu P."/>
            <person name="Feldblyum T.V."/>
            <person name="Feng J.-D."/>
            <person name="Fong B."/>
            <person name="Fujii C.Y."/>
            <person name="Gill J.E."/>
            <person name="Goldsmith A.D."/>
            <person name="Haas B."/>
            <person name="Hansen N.F."/>
            <person name="Hughes B."/>
            <person name="Huizar L."/>
            <person name="Hunter J.L."/>
            <person name="Jenkins J."/>
            <person name="Johnson-Hopson C."/>
            <person name="Khan S."/>
            <person name="Khaykin E."/>
            <person name="Kim C.J."/>
            <person name="Koo H.L."/>
            <person name="Kremenetskaia I."/>
            <person name="Kurtz D.B."/>
            <person name="Kwan A."/>
            <person name="Lam B."/>
            <person name="Langin-Hooper S."/>
            <person name="Lee A."/>
            <person name="Lee J.M."/>
            <person name="Lenz C.A."/>
            <person name="Li J.H."/>
            <person name="Li Y.-P."/>
            <person name="Lin X."/>
            <person name="Liu S.X."/>
            <person name="Liu Z.A."/>
            <person name="Luros J.S."/>
            <person name="Maiti R."/>
            <person name="Marziali A."/>
            <person name="Militscher J."/>
            <person name="Miranda M."/>
            <person name="Nguyen M."/>
            <person name="Nierman W.C."/>
            <person name="Osborne B.I."/>
            <person name="Pai G."/>
            <person name="Peterson J."/>
            <person name="Pham P.K."/>
            <person name="Rizzo M."/>
            <person name="Rooney T."/>
            <person name="Rowley D."/>
            <person name="Sakano H."/>
            <person name="Salzberg S.L."/>
            <person name="Schwartz J.R."/>
            <person name="Shinn P."/>
            <person name="Southwick A.M."/>
            <person name="Sun H."/>
            <person name="Tallon L.J."/>
            <person name="Tambunga G."/>
            <person name="Toriumi M.J."/>
            <person name="Town C.D."/>
            <person name="Utterback T."/>
            <person name="Van Aken S."/>
            <person name="Vaysberg M."/>
            <person name="Vysotskaia V.S."/>
            <person name="Walker M."/>
            <person name="Wu D."/>
            <person name="Yu G."/>
            <person name="Fraser C.M."/>
            <person name="Venter J.C."/>
            <person name="Davis R.W."/>
        </authorList>
    </citation>
    <scope>NUCLEOTIDE SEQUENCE [LARGE SCALE GENOMIC DNA]</scope>
    <source>
        <strain>cv. Columbia</strain>
    </source>
</reference>
<reference key="2">
    <citation type="journal article" date="2017" name="Plant J.">
        <title>Araport11: a complete reannotation of the Arabidopsis thaliana reference genome.</title>
        <authorList>
            <person name="Cheng C.Y."/>
            <person name="Krishnakumar V."/>
            <person name="Chan A.P."/>
            <person name="Thibaud-Nissen F."/>
            <person name="Schobel S."/>
            <person name="Town C.D."/>
        </authorList>
    </citation>
    <scope>GENOME REANNOTATION</scope>
    <source>
        <strain>cv. Columbia</strain>
    </source>
</reference>
<reference key="3">
    <citation type="journal article" date="2004" name="Prog. Lipid Res.">
        <title>GDSL family of serine esterases/lipases.</title>
        <authorList>
            <person name="Akoh C.C."/>
            <person name="Lee G.-C."/>
            <person name="Liaw Y.-C."/>
            <person name="Huang T.-H."/>
            <person name="Shaw J.-F."/>
        </authorList>
    </citation>
    <scope>REVIEW</scope>
</reference>
<reference key="4">
    <citation type="journal article" date="2008" name="Pak. J. Biol. Sci.">
        <title>Sequence analysis of GDSL lipase gene family in Arabidopsis thaliana.</title>
        <authorList>
            <person name="Ling H."/>
        </authorList>
    </citation>
    <scope>GENE FAMILY</scope>
</reference>
<gene>
    <name type="ordered locus">At1g28570</name>
    <name type="ORF">F1K23.19</name>
</gene>
<feature type="signal peptide" evidence="2">
    <location>
        <begin position="1"/>
        <end position="25"/>
    </location>
</feature>
<feature type="chain" id="PRO_0000367348" description="GDSL esterase/lipase At1g28570">
    <location>
        <begin position="26"/>
        <end position="389"/>
    </location>
</feature>
<feature type="active site" description="Nucleophile" evidence="1">
    <location>
        <position position="41"/>
    </location>
</feature>
<feature type="active site" evidence="1">
    <location>
        <position position="344"/>
    </location>
</feature>
<feature type="active site" evidence="1">
    <location>
        <position position="347"/>
    </location>
</feature>
<feature type="glycosylation site" description="N-linked (GlcNAc...) asparagine" evidence="2">
    <location>
        <position position="137"/>
    </location>
</feature>
<feature type="glycosylation site" description="N-linked (GlcNAc...) asparagine" evidence="2">
    <location>
        <position position="319"/>
    </location>
</feature>
<feature type="splice variant" id="VSP_036686" description="In isoform 2." evidence="3">
    <location>
        <begin position="88"/>
        <end position="159"/>
    </location>
</feature>
<accession>Q9FXJ1</accession>
<accession>Q3ED52</accession>
<protein>
    <recommendedName>
        <fullName>GDSL esterase/lipase At1g28570</fullName>
        <ecNumber>3.1.1.-</ecNumber>
    </recommendedName>
    <alternativeName>
        <fullName>Extracellular lipase At1g28570</fullName>
    </alternativeName>
</protein>
<organism>
    <name type="scientific">Arabidopsis thaliana</name>
    <name type="common">Mouse-ear cress</name>
    <dbReference type="NCBI Taxonomy" id="3702"/>
    <lineage>
        <taxon>Eukaryota</taxon>
        <taxon>Viridiplantae</taxon>
        <taxon>Streptophyta</taxon>
        <taxon>Embryophyta</taxon>
        <taxon>Tracheophyta</taxon>
        <taxon>Spermatophyta</taxon>
        <taxon>Magnoliopsida</taxon>
        <taxon>eudicotyledons</taxon>
        <taxon>Gunneridae</taxon>
        <taxon>Pentapetalae</taxon>
        <taxon>rosids</taxon>
        <taxon>malvids</taxon>
        <taxon>Brassicales</taxon>
        <taxon>Brassicaceae</taxon>
        <taxon>Camelineae</taxon>
        <taxon>Arabidopsis</taxon>
    </lineage>
</organism>
<proteinExistence type="inferred from homology"/>
<dbReference type="EC" id="3.1.1.-"/>
<dbReference type="EMBL" id="AC007508">
    <property type="protein sequence ID" value="AAG22837.1"/>
    <property type="molecule type" value="Genomic_DNA"/>
</dbReference>
<dbReference type="EMBL" id="CP002684">
    <property type="protein sequence ID" value="AEE30994.1"/>
    <property type="molecule type" value="Genomic_DNA"/>
</dbReference>
<dbReference type="EMBL" id="CP002684">
    <property type="protein sequence ID" value="AEE30995.1"/>
    <property type="molecule type" value="Genomic_DNA"/>
</dbReference>
<dbReference type="RefSeq" id="NP_174179.3">
    <molecule id="Q9FXJ1-1"/>
    <property type="nucleotide sequence ID" value="NM_102625.4"/>
</dbReference>
<dbReference type="RefSeq" id="NP_973930.1">
    <molecule id="Q9FXJ1-2"/>
    <property type="nucleotide sequence ID" value="NM_202201.1"/>
</dbReference>
<dbReference type="SMR" id="Q9FXJ1"/>
<dbReference type="FunCoup" id="Q9FXJ1">
    <property type="interactions" value="109"/>
</dbReference>
<dbReference type="GlyGen" id="Q9FXJ1">
    <property type="glycosylation" value="2 sites"/>
</dbReference>
<dbReference type="PaxDb" id="3702-AT1G28570.1"/>
<dbReference type="ProteomicsDB" id="221986">
    <molecule id="Q9FXJ1-1"/>
</dbReference>
<dbReference type="EnsemblPlants" id="AT1G28570.1">
    <molecule id="Q9FXJ1-1"/>
    <property type="protein sequence ID" value="AT1G28570.1"/>
    <property type="gene ID" value="AT1G28570"/>
</dbReference>
<dbReference type="EnsemblPlants" id="AT1G28570.2">
    <molecule id="Q9FXJ1-2"/>
    <property type="protein sequence ID" value="AT1G28570.2"/>
    <property type="gene ID" value="AT1G28570"/>
</dbReference>
<dbReference type="GeneID" id="839757"/>
<dbReference type="Gramene" id="AT1G28570.1">
    <molecule id="Q9FXJ1-1"/>
    <property type="protein sequence ID" value="AT1G28570.1"/>
    <property type="gene ID" value="AT1G28570"/>
</dbReference>
<dbReference type="Gramene" id="AT1G28570.2">
    <molecule id="Q9FXJ1-2"/>
    <property type="protein sequence ID" value="AT1G28570.2"/>
    <property type="gene ID" value="AT1G28570"/>
</dbReference>
<dbReference type="KEGG" id="ath:AT1G28570"/>
<dbReference type="Araport" id="AT1G28570"/>
<dbReference type="TAIR" id="AT1G28570"/>
<dbReference type="eggNOG" id="ENOG502QSMM">
    <property type="taxonomic scope" value="Eukaryota"/>
</dbReference>
<dbReference type="InParanoid" id="Q9FXJ1"/>
<dbReference type="OMA" id="HPHANIM"/>
<dbReference type="OrthoDB" id="1600564at2759"/>
<dbReference type="PhylomeDB" id="Q9FXJ1"/>
<dbReference type="BioCyc" id="ARA:AT1G28570-MONOMER"/>
<dbReference type="PRO" id="PR:Q9FXJ1"/>
<dbReference type="Proteomes" id="UP000006548">
    <property type="component" value="Chromosome 1"/>
</dbReference>
<dbReference type="ExpressionAtlas" id="Q9FXJ1">
    <property type="expression patterns" value="baseline and differential"/>
</dbReference>
<dbReference type="GO" id="GO:0005576">
    <property type="term" value="C:extracellular region"/>
    <property type="evidence" value="ECO:0007669"/>
    <property type="project" value="UniProtKB-SubCell"/>
</dbReference>
<dbReference type="GO" id="GO:0016788">
    <property type="term" value="F:hydrolase activity, acting on ester bonds"/>
    <property type="evidence" value="ECO:0007669"/>
    <property type="project" value="InterPro"/>
</dbReference>
<dbReference type="GO" id="GO:0016042">
    <property type="term" value="P:lipid catabolic process"/>
    <property type="evidence" value="ECO:0007669"/>
    <property type="project" value="UniProtKB-KW"/>
</dbReference>
<dbReference type="CDD" id="cd01837">
    <property type="entry name" value="SGNH_plant_lipase_like"/>
    <property type="match status" value="1"/>
</dbReference>
<dbReference type="Gene3D" id="3.40.50.1110">
    <property type="entry name" value="SGNH hydrolase"/>
    <property type="match status" value="1"/>
</dbReference>
<dbReference type="InterPro" id="IPR001087">
    <property type="entry name" value="GDSL"/>
</dbReference>
<dbReference type="InterPro" id="IPR036514">
    <property type="entry name" value="SGNH_hydro_sf"/>
</dbReference>
<dbReference type="InterPro" id="IPR035669">
    <property type="entry name" value="SGNH_plant_lipase-like"/>
</dbReference>
<dbReference type="PANTHER" id="PTHR22835:SF678">
    <property type="entry name" value="SINAPINE ESTERASE"/>
    <property type="match status" value="1"/>
</dbReference>
<dbReference type="PANTHER" id="PTHR22835">
    <property type="entry name" value="ZINC FINGER FYVE DOMAIN CONTAINING PROTEIN"/>
    <property type="match status" value="1"/>
</dbReference>
<dbReference type="Pfam" id="PF00657">
    <property type="entry name" value="Lipase_GDSL"/>
    <property type="match status" value="1"/>
</dbReference>
<dbReference type="SUPFAM" id="SSF52266">
    <property type="entry name" value="SGNH hydrolase"/>
    <property type="match status" value="1"/>
</dbReference>
<evidence type="ECO:0000250" key="1"/>
<evidence type="ECO:0000255" key="2"/>
<evidence type="ECO:0000305" key="3"/>
<name>GDL6_ARATH</name>
<keyword id="KW-0025">Alternative splicing</keyword>
<keyword id="KW-0325">Glycoprotein</keyword>
<keyword id="KW-0378">Hydrolase</keyword>
<keyword id="KW-0442">Lipid degradation</keyword>
<keyword id="KW-0443">Lipid metabolism</keyword>
<keyword id="KW-1185">Reference proteome</keyword>
<keyword id="KW-0964">Secreted</keyword>
<keyword id="KW-0732">Signal</keyword>
<sequence length="389" mass="43301">MATLFMKLVSFFLILSTFCLTTVNSEPQCHNFKSIISFGDSIADTGNLLALSDPTNLPKVAFLPYGETFFHHPTGRFSNGRLIIDFIAEFLGFPLVPPFYGSQNANFEKGVNFAVGGATALERSFLEERGIHFPYTNVSLAVQLSSFKESLPNLCVSPSDCRDMIENSLILMGEIGGNDYNYAFFVGKNIEEIKELVPLVIETISSAITELIGMGGKTFLVPGEFPLGCSVAYLSLYQTSNIEEYDPLTGCLKWLNKFSEYHDEQLQAELNRLQKLYPHVNIIYADYYNTLLRLAQEPAKFGFISRPLPACCALGGPFNFTLGRKRGTQVPECCDDPSKYVSWDGVHMTEAAYRLMAEGILKGPYAIPPFDWSCLSSEIKNTQNSLMNN</sequence>
<comment type="subcellular location">
    <subcellularLocation>
        <location evidence="3">Secreted</location>
    </subcellularLocation>
</comment>
<comment type="alternative products">
    <event type="alternative splicing"/>
    <isoform>
        <id>Q9FXJ1-1</id>
        <name>1</name>
        <sequence type="displayed"/>
    </isoform>
    <isoform>
        <id>Q9FXJ1-2</id>
        <name>2</name>
        <sequence type="described" ref="VSP_036686"/>
    </isoform>
</comment>
<comment type="similarity">
    <text evidence="3">Belongs to the 'GDSL' lipolytic enzyme family.</text>
</comment>